<protein>
    <recommendedName>
        <fullName evidence="8">CUB and zona pellucida-like domain-containing protein 1</fullName>
        <shortName>CUB and ZP domain-containing protein 1</shortName>
    </recommendedName>
    <alternativeName>
        <fullName>Estrogen-regulated protein 1</fullName>
    </alternativeName>
    <alternativeName>
        <fullName>Uterus/ovary-specific protein 44</fullName>
    </alternativeName>
</protein>
<reference evidence="8 10" key="1">
    <citation type="journal article" date="1999" name="J. Biol. Chem.">
        <title>Cloning and uterus/oviduct-specific expression of a novel estrogen-regulated gene (ERG1).</title>
        <authorList>
            <person name="Chen D."/>
            <person name="Xu X."/>
            <person name="Zhu L.-J."/>
            <person name="Angervo M."/>
            <person name="Li Q."/>
            <person name="Bagchi M.K."/>
            <person name="Bagchi I.C."/>
        </authorList>
    </citation>
    <scope>NUCLEOTIDE SEQUENCE [MRNA]</scope>
    <scope>TISSUE SPECIFICITY</scope>
    <scope>DEVELOPMENTAL STAGE</scope>
    <scope>INDUCTION</scope>
    <source>
        <strain evidence="10">Sprague-Dawley</strain>
        <tissue evidence="6">Uterus</tissue>
    </source>
</reference>
<reference evidence="8 9" key="2">
    <citation type="journal article" date="2001" name="Endocrinology">
        <title>Induction of UO-44 gene expression by tamoxifen in the rat uterus and ovary.</title>
        <authorList>
            <person name="Huynh H."/>
            <person name="Ng C.Y."/>
            <person name="Lim K.B."/>
            <person name="Ong C.K."/>
            <person name="Ong C.S."/>
            <person name="Tran E."/>
            <person name="Nguyen T.T.T."/>
            <person name="Chan T.W.M.G."/>
        </authorList>
    </citation>
    <scope>NUCLEOTIDE SEQUENCE [MRNA]</scope>
    <scope>TISSUE SPECIFICITY</scope>
    <scope>INDUCTION</scope>
    <source>
        <strain evidence="9">Sprague-Dawley</strain>
        <tissue evidence="9">Uterus</tissue>
    </source>
</reference>
<reference key="3">
    <citation type="journal article" date="2004" name="Genome Res.">
        <title>The status, quality, and expansion of the NIH full-length cDNA project: the Mammalian Gene Collection (MGC).</title>
        <authorList>
            <consortium name="The MGC Project Team"/>
        </authorList>
    </citation>
    <scope>NUCLEOTIDE SEQUENCE [LARGE SCALE MRNA] OF 2-607</scope>
    <source>
        <tissue>Ovary</tissue>
    </source>
</reference>
<gene>
    <name evidence="11" type="primary">Cuzd1</name>
    <name type="synonym">Erg1</name>
</gene>
<keyword id="KW-0968">Cytoplasmic vesicle</keyword>
<keyword id="KW-1015">Disulfide bond</keyword>
<keyword id="KW-0325">Glycoprotein</keyword>
<keyword id="KW-0472">Membrane</keyword>
<keyword id="KW-1185">Reference proteome</keyword>
<keyword id="KW-0677">Repeat</keyword>
<keyword id="KW-0732">Signal</keyword>
<keyword id="KW-0812">Transmembrane</keyword>
<keyword id="KW-1133">Transmembrane helix</keyword>
<proteinExistence type="evidence at transcript level"/>
<dbReference type="EMBL" id="AF167170">
    <property type="protein sequence ID" value="AAD55939.1"/>
    <property type="molecule type" value="mRNA"/>
</dbReference>
<dbReference type="EMBL" id="AF022147">
    <property type="protein sequence ID" value="AAB71895.1"/>
    <property type="molecule type" value="mRNA"/>
</dbReference>
<dbReference type="EMBL" id="BC090345">
    <property type="protein sequence ID" value="AAH90345.1"/>
    <property type="molecule type" value="mRNA"/>
</dbReference>
<dbReference type="RefSeq" id="NP_446457.1">
    <property type="nucleotide sequence ID" value="NM_054005.1"/>
</dbReference>
<dbReference type="SMR" id="Q9QZT0"/>
<dbReference type="STRING" id="10116.ENSRNOP00000045430"/>
<dbReference type="GlyCosmos" id="Q9QZT0">
    <property type="glycosylation" value="4 sites, No reported glycans"/>
</dbReference>
<dbReference type="GlyGen" id="Q9QZT0">
    <property type="glycosylation" value="4 sites"/>
</dbReference>
<dbReference type="PhosphoSitePlus" id="Q9QZT0"/>
<dbReference type="PaxDb" id="10116-ENSRNOP00000045430"/>
<dbReference type="GeneID" id="117179"/>
<dbReference type="KEGG" id="rno:117179"/>
<dbReference type="UCSC" id="RGD:619771">
    <property type="organism name" value="rat"/>
</dbReference>
<dbReference type="AGR" id="RGD:619771"/>
<dbReference type="CTD" id="50624"/>
<dbReference type="RGD" id="619771">
    <property type="gene designation" value="Cuzd1"/>
</dbReference>
<dbReference type="eggNOG" id="ENOG502RSDM">
    <property type="taxonomic scope" value="Eukaryota"/>
</dbReference>
<dbReference type="InParanoid" id="Q9QZT0"/>
<dbReference type="OrthoDB" id="10063988at2759"/>
<dbReference type="PhylomeDB" id="Q9QZT0"/>
<dbReference type="PRO" id="PR:Q9QZT0"/>
<dbReference type="Proteomes" id="UP000002494">
    <property type="component" value="Unplaced"/>
</dbReference>
<dbReference type="GO" id="GO:0009986">
    <property type="term" value="C:cell surface"/>
    <property type="evidence" value="ECO:0000318"/>
    <property type="project" value="GO_Central"/>
</dbReference>
<dbReference type="GO" id="GO:0005615">
    <property type="term" value="C:extracellular space"/>
    <property type="evidence" value="ECO:0000318"/>
    <property type="project" value="GO_Central"/>
</dbReference>
<dbReference type="GO" id="GO:0016020">
    <property type="term" value="C:membrane"/>
    <property type="evidence" value="ECO:0000266"/>
    <property type="project" value="RGD"/>
</dbReference>
<dbReference type="GO" id="GO:0042588">
    <property type="term" value="C:zymogen granule"/>
    <property type="evidence" value="ECO:0000266"/>
    <property type="project" value="RGD"/>
</dbReference>
<dbReference type="GO" id="GO:0042589">
    <property type="term" value="C:zymogen granule membrane"/>
    <property type="evidence" value="ECO:0000250"/>
    <property type="project" value="UniProtKB"/>
</dbReference>
<dbReference type="GO" id="GO:0007565">
    <property type="term" value="P:female pregnancy"/>
    <property type="evidence" value="ECO:0000304"/>
    <property type="project" value="RGD"/>
</dbReference>
<dbReference type="GO" id="GO:0009755">
    <property type="term" value="P:hormone-mediated signaling pathway"/>
    <property type="evidence" value="ECO:0000314"/>
    <property type="project" value="RGD"/>
</dbReference>
<dbReference type="GO" id="GO:0032023">
    <property type="term" value="P:trypsinogen activation"/>
    <property type="evidence" value="ECO:0000250"/>
    <property type="project" value="UniProtKB"/>
</dbReference>
<dbReference type="CDD" id="cd00041">
    <property type="entry name" value="CUB"/>
    <property type="match status" value="2"/>
</dbReference>
<dbReference type="FunFam" id="2.60.120.290:FF:000078">
    <property type="entry name" value="CUB and zona pellucida-like domain-containing protein 1"/>
    <property type="match status" value="1"/>
</dbReference>
<dbReference type="FunFam" id="2.60.40.3210:FF:000009">
    <property type="entry name" value="CUB and zona pellucida-like domain-containing protein 1"/>
    <property type="match status" value="1"/>
</dbReference>
<dbReference type="FunFam" id="2.60.40.4100:FF:000005">
    <property type="entry name" value="Deleted in malignant brain tumors 1"/>
    <property type="match status" value="1"/>
</dbReference>
<dbReference type="FunFam" id="2.60.120.290:FF:000004">
    <property type="entry name" value="Metalloendopeptidase"/>
    <property type="match status" value="1"/>
</dbReference>
<dbReference type="Gene3D" id="2.60.120.290">
    <property type="entry name" value="Spermadhesin, CUB domain"/>
    <property type="match status" value="2"/>
</dbReference>
<dbReference type="Gene3D" id="2.60.40.4100">
    <property type="entry name" value="Zona pellucida, ZP-C domain"/>
    <property type="match status" value="1"/>
</dbReference>
<dbReference type="Gene3D" id="2.60.40.3210">
    <property type="entry name" value="Zona pellucida, ZP-N domain"/>
    <property type="match status" value="1"/>
</dbReference>
<dbReference type="InterPro" id="IPR000859">
    <property type="entry name" value="CUB_dom"/>
</dbReference>
<dbReference type="InterPro" id="IPR035914">
    <property type="entry name" value="Sperma_CUB_dom_sf"/>
</dbReference>
<dbReference type="InterPro" id="IPR055355">
    <property type="entry name" value="ZP-C"/>
</dbReference>
<dbReference type="InterPro" id="IPR042235">
    <property type="entry name" value="ZP-C_dom"/>
</dbReference>
<dbReference type="InterPro" id="IPR055356">
    <property type="entry name" value="ZP-N"/>
</dbReference>
<dbReference type="InterPro" id="IPR048290">
    <property type="entry name" value="ZP_chr"/>
</dbReference>
<dbReference type="InterPro" id="IPR001507">
    <property type="entry name" value="ZP_dom"/>
</dbReference>
<dbReference type="PANTHER" id="PTHR14002:SF27">
    <property type="entry name" value="CUB AND ZONA PELLUCIDA-LIKE DOMAIN-CONTAINING PROTEIN 1"/>
    <property type="match status" value="1"/>
</dbReference>
<dbReference type="PANTHER" id="PTHR14002">
    <property type="entry name" value="ENDOGLIN/TGF-BETA RECEPTOR TYPE III"/>
    <property type="match status" value="1"/>
</dbReference>
<dbReference type="Pfam" id="PF00431">
    <property type="entry name" value="CUB"/>
    <property type="match status" value="2"/>
</dbReference>
<dbReference type="Pfam" id="PF00100">
    <property type="entry name" value="Zona_pellucida"/>
    <property type="match status" value="1"/>
</dbReference>
<dbReference type="Pfam" id="PF23344">
    <property type="entry name" value="ZP-N"/>
    <property type="match status" value="1"/>
</dbReference>
<dbReference type="PRINTS" id="PR00023">
    <property type="entry name" value="ZPELLUCIDA"/>
</dbReference>
<dbReference type="SMART" id="SM00042">
    <property type="entry name" value="CUB"/>
    <property type="match status" value="2"/>
</dbReference>
<dbReference type="SMART" id="SM00241">
    <property type="entry name" value="ZP"/>
    <property type="match status" value="1"/>
</dbReference>
<dbReference type="SUPFAM" id="SSF49854">
    <property type="entry name" value="Spermadhesin, CUB domain"/>
    <property type="match status" value="2"/>
</dbReference>
<dbReference type="PROSITE" id="PS01180">
    <property type="entry name" value="CUB"/>
    <property type="match status" value="2"/>
</dbReference>
<dbReference type="PROSITE" id="PS51034">
    <property type="entry name" value="ZP_2"/>
    <property type="match status" value="1"/>
</dbReference>
<feature type="signal peptide" evidence="3">
    <location>
        <begin position="1"/>
        <end position="19"/>
    </location>
</feature>
<feature type="chain" id="PRO_0000233333" description="CUB and zona pellucida-like domain-containing protein 1" evidence="3">
    <location>
        <begin position="20"/>
        <end position="607"/>
    </location>
</feature>
<feature type="topological domain" description="Lumenal" evidence="8">
    <location>
        <begin position="20"/>
        <end position="568"/>
    </location>
</feature>
<feature type="transmembrane region" description="Helical" evidence="3">
    <location>
        <begin position="569"/>
        <end position="589"/>
    </location>
</feature>
<feature type="topological domain" description="Cytoplasmic" evidence="8">
    <location>
        <begin position="590"/>
        <end position="607"/>
    </location>
</feature>
<feature type="domain" description="CUB 1" evidence="4">
    <location>
        <begin position="32"/>
        <end position="146"/>
    </location>
</feature>
<feature type="domain" description="CUB 2" evidence="4">
    <location>
        <begin position="154"/>
        <end position="265"/>
    </location>
</feature>
<feature type="domain" description="ZP" evidence="5">
    <location>
        <begin position="276"/>
        <end position="519"/>
    </location>
</feature>
<feature type="glycosylation site" description="N-linked (GlcNAc...) asparagine" evidence="3">
    <location>
        <position position="22"/>
    </location>
</feature>
<feature type="glycosylation site" description="N-linked (GlcNAc...) asparagine" evidence="3">
    <location>
        <position position="67"/>
    </location>
</feature>
<feature type="glycosylation site" description="N-linked (GlcNAc...) asparagine" evidence="3">
    <location>
        <position position="195"/>
    </location>
</feature>
<feature type="glycosylation site" description="N-linked (GlcNAc...) asparagine" evidence="3">
    <location>
        <position position="419"/>
    </location>
</feature>
<feature type="disulfide bond" evidence="4">
    <location>
        <begin position="32"/>
        <end position="58"/>
    </location>
</feature>
<feature type="disulfide bond" evidence="4">
    <location>
        <begin position="85"/>
        <end position="107"/>
    </location>
</feature>
<feature type="disulfide bond" evidence="4">
    <location>
        <begin position="154"/>
        <end position="180"/>
    </location>
</feature>
<feature type="disulfide bond" evidence="4">
    <location>
        <begin position="207"/>
        <end position="229"/>
    </location>
</feature>
<feature type="disulfide bond" evidence="4">
    <location>
        <begin position="442"/>
        <end position="498"/>
    </location>
</feature>
<feature type="sequence conflict" description="In Ref. 1; AAD55939." evidence="8" ref="1">
    <original>S</original>
    <variation>M</variation>
    <location>
        <position position="35"/>
    </location>
</feature>
<feature type="sequence conflict" description="In Ref. 3; AAH90345." evidence="8" ref="3">
    <original>H</original>
    <variation>T</variation>
    <location>
        <position position="273"/>
    </location>
</feature>
<feature type="sequence conflict" description="In Ref. 3; AAH90345." evidence="8" ref="3">
    <original>E</original>
    <variation>K</variation>
    <location>
        <position position="469"/>
    </location>
</feature>
<evidence type="ECO:0000250" key="1">
    <source>
        <dbReference type="UniProtKB" id="P70412"/>
    </source>
</evidence>
<evidence type="ECO:0000250" key="2">
    <source>
        <dbReference type="UniProtKB" id="Q86UP6"/>
    </source>
</evidence>
<evidence type="ECO:0000255" key="3"/>
<evidence type="ECO:0000255" key="4">
    <source>
        <dbReference type="PROSITE-ProRule" id="PRU00059"/>
    </source>
</evidence>
<evidence type="ECO:0000255" key="5">
    <source>
        <dbReference type="PROSITE-ProRule" id="PRU00375"/>
    </source>
</evidence>
<evidence type="ECO:0000269" key="6">
    <source>
    </source>
</evidence>
<evidence type="ECO:0000269" key="7">
    <source>
    </source>
</evidence>
<evidence type="ECO:0000305" key="8"/>
<evidence type="ECO:0000312" key="9">
    <source>
        <dbReference type="EMBL" id="AAB71895.1"/>
    </source>
</evidence>
<evidence type="ECO:0000312" key="10">
    <source>
        <dbReference type="EMBL" id="AAD55939.1"/>
    </source>
</evidence>
<evidence type="ECO:0000312" key="11">
    <source>
        <dbReference type="RGD" id="619771"/>
    </source>
</evidence>
<name>CUZD1_RAT</name>
<accession>Q9QZT0</accession>
<accession>O35360</accession>
<accession>Q5D000</accession>
<sequence>MEVTGRLFIWAILAVSCRAQLNSTAAEGRPRCTASLGGANLGETHKALILNLNADENCTWTIERPENRSIRIIFSHIQLDPDSRCENESIKVFDGRSTSGPLLGEACSKNDFVPVFESSANSLTFQIVTDWTRVQRSVFIFYYFFSSGTTIPNCGGYLQTLEGSFSSPNYPRPHPELAYCVWHIQVEKGYKINLNFTELFLEMDEYCRFDFIAVYDGPSTTSGLLKQVCGRGTPTFESSSDAMTVVLSTDYANSYRGFFASYASTYVQEVNTHSLSCASDKMRVIISKSYLQSLNYHESNLQLNDPTCRPSVSNVVEFSIPLHECGTIKKIEDHTISYTNIITFTQSPESAVITRKRHLQIVVTCEMEYNSTVEILYITEDDVIQNQSVLGKYNTSMALYESGSFENLIQESPYYVDLNQTLFVQATLHTSDPSLVVFLDTCRASPTSDFASPTYDLISSGCSRDETCEVYPLFGHYGRFQFNAFKFLRHLSSVYLKCKILICDTSDHTSRCNQGCVSRRKRDIPSYKWKTDSVIGPIRLKRDRLVNGDSGLLPQTHEAEISKQPLSHLHLFSFMVLALNVVIVVTATVRHFLNRWKDHGYQKLQVY</sequence>
<comment type="function">
    <text evidence="1 2">Localized to zymogen granules, where it functions in trypsinogen activation (By similarity). May indirectly regulate cell motility, cell-cell and cell/extracellular matrix interactions (By similarity).</text>
</comment>
<comment type="subcellular location">
    <subcellularLocation>
        <location evidence="1">Zymogen granule membrane</location>
        <topology evidence="1">Single-pass type I membrane protein</topology>
    </subcellularLocation>
</comment>
<comment type="tissue specificity">
    <text evidence="6 7">Expressed predominantly in epithelium of uterus and oviduct.</text>
</comment>
<comment type="developmental stage">
    <text evidence="6">In uterus, strongly expressed at proestrus, declines at estrus and disappears at diestrus. In oviduct, strongly expressed at both proestrus and estrus but declines significantly at diestrus. In uterus, highly expressed on day 1 of pregnancy but declines dramatically on day 2 and is not detected between days 3 and 7. In oviduct, highly expressed on days 1 and 2 of pregnancy but declines significantly on days 3 and 4.</text>
</comment>
<comment type="induction">
    <text evidence="6 7">By estrogen, tamoxifen and growth hormone. Repressed by progesterone and by the antiestrogen ICI 182780.</text>
</comment>
<organism>
    <name type="scientific">Rattus norvegicus</name>
    <name type="common">Rat</name>
    <dbReference type="NCBI Taxonomy" id="10116"/>
    <lineage>
        <taxon>Eukaryota</taxon>
        <taxon>Metazoa</taxon>
        <taxon>Chordata</taxon>
        <taxon>Craniata</taxon>
        <taxon>Vertebrata</taxon>
        <taxon>Euteleostomi</taxon>
        <taxon>Mammalia</taxon>
        <taxon>Eutheria</taxon>
        <taxon>Euarchontoglires</taxon>
        <taxon>Glires</taxon>
        <taxon>Rodentia</taxon>
        <taxon>Myomorpha</taxon>
        <taxon>Muroidea</taxon>
        <taxon>Muridae</taxon>
        <taxon>Murinae</taxon>
        <taxon>Rattus</taxon>
    </lineage>
</organism>